<proteinExistence type="inferred from homology"/>
<evidence type="ECO:0000250" key="1"/>
<evidence type="ECO:0000305" key="2"/>
<comment type="function">
    <text evidence="1">May participate in DNA packaging/capsid maturation events. Promotes efficient incorporation of tegument proteins UL46, UL49, and US3 homologs into virions. May also play a role in capsid transport to the trans-Golgi network (TGN) (By similarity).</text>
</comment>
<comment type="subunit">
    <text evidence="1">Interacts (via C-terminus) with UL16.</text>
</comment>
<comment type="subcellular location">
    <subcellularLocation>
        <location evidence="1">Virion tegument</location>
    </subcellularLocation>
    <subcellularLocation>
        <location evidence="1">Host cytoplasm</location>
    </subcellularLocation>
    <subcellularLocation>
        <location evidence="1">Host nucleus</location>
    </subcellularLocation>
</comment>
<comment type="similarity">
    <text evidence="2">Belongs to the alphaherpesvirinae UL21 protein family.</text>
</comment>
<feature type="chain" id="PRO_0000385154" description="Tegument protein UL21 homolog">
    <location>
        <begin position="1"/>
        <end position="541"/>
    </location>
</feature>
<reference key="1">
    <citation type="journal article" date="2002" name="J. Virol.">
        <title>Comparison of the complete DNA sequences of the Oka varicella vaccine and its parental virus.</title>
        <authorList>
            <person name="Gomi Y."/>
            <person name="Sunamachi H."/>
            <person name="Mori Y."/>
            <person name="Nagaike K."/>
            <person name="Takahashi M."/>
            <person name="Yamanishi K."/>
        </authorList>
    </citation>
    <scope>NUCLEOTIDE SEQUENCE [LARGE SCALE GENOMIC DNA]</scope>
    <source>
        <strain>Isolate Human/Japan/P-Oka/1970</strain>
        <strain>Oka varicella vaccine Biken (V-Oka-Biken)</strain>
    </source>
</reference>
<reference key="2">
    <citation type="journal article" date="2008" name="J. Virol.">
        <title>Complete DNA sequences of two oka strain varicella-zoster virus genomes.</title>
        <authorList>
            <person name="Tillieux S.L."/>
            <person name="Halsey W.S."/>
            <person name="Thomas E.S."/>
            <person name="Voycik J.J."/>
            <person name="Sathe G.M."/>
            <person name="Vassilev V."/>
        </authorList>
    </citation>
    <scope>NUCLEOTIDE SEQUENCE [LARGE SCALE GENOMIC DNA]</scope>
    <source>
        <strain>Oka varicella vaccine VarilRix (V-Oka-GSK)</strain>
        <strain>Oka varicella vaccine Varivax (V-Oka-Merck)</strain>
    </source>
</reference>
<gene>
    <name type="ORF">ORF38</name>
</gene>
<dbReference type="EMBL" id="AB097932">
    <property type="status" value="NOT_ANNOTATED_CDS"/>
    <property type="molecule type" value="Genomic_DNA"/>
</dbReference>
<dbReference type="EMBL" id="AB097933">
    <property type="status" value="NOT_ANNOTATED_CDS"/>
    <property type="molecule type" value="Genomic_DNA"/>
</dbReference>
<dbReference type="EMBL" id="DQ008354">
    <property type="protein sequence ID" value="AAY57650.1"/>
    <property type="molecule type" value="Genomic_DNA"/>
</dbReference>
<dbReference type="EMBL" id="DQ008355">
    <property type="protein sequence ID" value="AAY57721.1"/>
    <property type="molecule type" value="Genomic_DNA"/>
</dbReference>
<dbReference type="SMR" id="Q4JQT7"/>
<dbReference type="IntAct" id="Q4JQT7">
    <property type="interactions" value="24"/>
</dbReference>
<dbReference type="Proteomes" id="UP000002603">
    <property type="component" value="Genome"/>
</dbReference>
<dbReference type="Proteomes" id="UP000008504">
    <property type="component" value="Genome"/>
</dbReference>
<dbReference type="Proteomes" id="UP000008505">
    <property type="component" value="Genome"/>
</dbReference>
<dbReference type="Proteomes" id="UP000008506">
    <property type="component" value="Genome"/>
</dbReference>
<dbReference type="GO" id="GO:0030430">
    <property type="term" value="C:host cell cytoplasm"/>
    <property type="evidence" value="ECO:0007669"/>
    <property type="project" value="UniProtKB-SubCell"/>
</dbReference>
<dbReference type="GO" id="GO:0042025">
    <property type="term" value="C:host cell nucleus"/>
    <property type="evidence" value="ECO:0007669"/>
    <property type="project" value="UniProtKB-SubCell"/>
</dbReference>
<dbReference type="GO" id="GO:0019033">
    <property type="term" value="C:viral tegument"/>
    <property type="evidence" value="ECO:0007669"/>
    <property type="project" value="UniProtKB-SubCell"/>
</dbReference>
<dbReference type="InterPro" id="IPR004936">
    <property type="entry name" value="Herpes_UL21"/>
</dbReference>
<dbReference type="Pfam" id="PF03252">
    <property type="entry name" value="Herpes_UL21"/>
    <property type="match status" value="1"/>
</dbReference>
<keyword id="KW-1035">Host cytoplasm</keyword>
<keyword id="KW-1048">Host nucleus</keyword>
<keyword id="KW-0946">Virion</keyword>
<keyword id="KW-0920">Virion tegument</keyword>
<organism>
    <name type="scientific">Varicella-zoster virus (strain Oka vaccine)</name>
    <name type="common">HHV-3</name>
    <name type="synonym">Human herpesvirus 3</name>
    <dbReference type="NCBI Taxonomy" id="341980"/>
    <lineage>
        <taxon>Viruses</taxon>
        <taxon>Duplodnaviria</taxon>
        <taxon>Heunggongvirae</taxon>
        <taxon>Peploviricota</taxon>
        <taxon>Herviviricetes</taxon>
        <taxon>Herpesvirales</taxon>
        <taxon>Orthoherpesviridae</taxon>
        <taxon>Alphaherpesvirinae</taxon>
        <taxon>Varicellovirus</taxon>
        <taxon>Varicellovirus humanalpha3</taxon>
        <taxon>Human herpesvirus 3</taxon>
    </lineage>
</organism>
<name>TEG4_VZVO</name>
<protein>
    <recommendedName>
        <fullName>Tegument protein UL21 homolog</fullName>
    </recommendedName>
</protein>
<organismHost>
    <name type="scientific">Homo sapiens</name>
    <name type="common">Human</name>
    <dbReference type="NCBI Taxonomy" id="9606"/>
</organismHost>
<sequence>MEFPYHSTVSYNGVTFYFNERATRAYFICGGCLISIPRKHGGEIAKFGHVVRGVGPGDRSVASYVRSELNRTGKTWAVSSNNNCVFLDRVALLAAGSGAVDRDLCGTFDVEVEDPTLADYLVSLPVTHLTLVAGVDVTRENKLKLFPTPTAINTTNGFMYVPNEASFSLVYMRMLELPEGLQELVSGLFDGTPEIRDALNGSNDDEKTSIIVSRRAADVVTEDVKADDVPISGEPYSEKQPRRRKKSDHITLSNFVQIRTIPRVMDIWDPRHKATTHCIRALSCAVFFADEVIFKARKWPGLEDELNEARETIYTAVVAVYGERGELPFFGHAYGRDLTSCQRFVIVQYILSRWEAFNCYAVIEDLTRSYVNALPSDDDTDQVAQDLIRTIVDTANSLLREVGFIGTLAETLLFLPLPQLPCYKETSHLAKKEGVRILRLAKTGVGLSDTVPVDVSVTERHEYEISRYLDTLYSGDPCYNGAVRLCRLLGSSIPIALYYNTISGNAFEPYFAGRRYIAYLGALFFGRVHQTPFGDGKKTQR</sequence>
<accession>Q4JQT7</accession>